<proteinExistence type="evidence at transcript level"/>
<accession>P23344</accession>
<comment type="function">
    <text>Actins are highly conserved proteins that are involved in various types of cell motility and are ubiquitously expressed in all eukaryotic cells.</text>
</comment>
<comment type="function">
    <text>Essential component of cell cytoskeleton; plays an important role in cytoplasmic streaming, cell shape determination, cell division, organelle movement and extension growth.</text>
</comment>
<comment type="catalytic activity">
    <reaction evidence="1">
        <text>ATP + H2O = ADP + phosphate + H(+)</text>
        <dbReference type="Rhea" id="RHEA:13065"/>
        <dbReference type="ChEBI" id="CHEBI:15377"/>
        <dbReference type="ChEBI" id="CHEBI:15378"/>
        <dbReference type="ChEBI" id="CHEBI:30616"/>
        <dbReference type="ChEBI" id="CHEBI:43474"/>
        <dbReference type="ChEBI" id="CHEBI:456216"/>
    </reaction>
</comment>
<comment type="subcellular location">
    <subcellularLocation>
        <location>Cytoplasm</location>
        <location>Cytoskeleton</location>
    </subcellularLocation>
</comment>
<comment type="similarity">
    <text evidence="2">Belongs to the actin family.</text>
</comment>
<dbReference type="EC" id="3.6.4.-" evidence="1"/>
<dbReference type="EMBL" id="X17525">
    <property type="status" value="NOT_ANNOTATED_CDS"/>
    <property type="molecule type" value="mRNA"/>
</dbReference>
<dbReference type="PIR" id="S07003">
    <property type="entry name" value="S07003"/>
</dbReference>
<dbReference type="SMR" id="P23344"/>
<dbReference type="GO" id="GO:0005737">
    <property type="term" value="C:cytoplasm"/>
    <property type="evidence" value="ECO:0007669"/>
    <property type="project" value="UniProtKB-KW"/>
</dbReference>
<dbReference type="GO" id="GO:0005856">
    <property type="term" value="C:cytoskeleton"/>
    <property type="evidence" value="ECO:0007669"/>
    <property type="project" value="UniProtKB-SubCell"/>
</dbReference>
<dbReference type="GO" id="GO:0005524">
    <property type="term" value="F:ATP binding"/>
    <property type="evidence" value="ECO:0007669"/>
    <property type="project" value="UniProtKB-KW"/>
</dbReference>
<dbReference type="GO" id="GO:0016787">
    <property type="term" value="F:hydrolase activity"/>
    <property type="evidence" value="ECO:0007669"/>
    <property type="project" value="UniProtKB-KW"/>
</dbReference>
<dbReference type="FunFam" id="2.30.36.70:FF:000001">
    <property type="entry name" value="Actin, alpha skeletal muscle"/>
    <property type="match status" value="1"/>
</dbReference>
<dbReference type="FunFam" id="3.30.420.40:FF:000291">
    <property type="entry name" value="Actin, alpha skeletal muscle"/>
    <property type="match status" value="1"/>
</dbReference>
<dbReference type="FunFam" id="3.30.420.40:FF:000404">
    <property type="entry name" value="Major actin"/>
    <property type="match status" value="1"/>
</dbReference>
<dbReference type="FunFam" id="3.30.420.40:FF:000058">
    <property type="entry name" value="Putative actin-related protein 5"/>
    <property type="match status" value="1"/>
</dbReference>
<dbReference type="Gene3D" id="3.30.420.40">
    <property type="match status" value="2"/>
</dbReference>
<dbReference type="Gene3D" id="3.90.640.10">
    <property type="entry name" value="Actin, Chain A, domain 4"/>
    <property type="match status" value="1"/>
</dbReference>
<dbReference type="InterPro" id="IPR004000">
    <property type="entry name" value="Actin"/>
</dbReference>
<dbReference type="InterPro" id="IPR020902">
    <property type="entry name" value="Actin/actin-like_CS"/>
</dbReference>
<dbReference type="InterPro" id="IPR004001">
    <property type="entry name" value="Actin_CS"/>
</dbReference>
<dbReference type="InterPro" id="IPR043129">
    <property type="entry name" value="ATPase_NBD"/>
</dbReference>
<dbReference type="PANTHER" id="PTHR11937">
    <property type="entry name" value="ACTIN"/>
    <property type="match status" value="1"/>
</dbReference>
<dbReference type="Pfam" id="PF00022">
    <property type="entry name" value="Actin"/>
    <property type="match status" value="1"/>
</dbReference>
<dbReference type="PRINTS" id="PR00190">
    <property type="entry name" value="ACTIN"/>
</dbReference>
<dbReference type="SMART" id="SM00268">
    <property type="entry name" value="ACTIN"/>
    <property type="match status" value="1"/>
</dbReference>
<dbReference type="SUPFAM" id="SSF53067">
    <property type="entry name" value="Actin-like ATPase domain"/>
    <property type="match status" value="2"/>
</dbReference>
<dbReference type="PROSITE" id="PS00406">
    <property type="entry name" value="ACTINS_1"/>
    <property type="match status" value="1"/>
</dbReference>
<dbReference type="PROSITE" id="PS00432">
    <property type="entry name" value="ACTINS_2"/>
    <property type="match status" value="1"/>
</dbReference>
<dbReference type="PROSITE" id="PS01132">
    <property type="entry name" value="ACTINS_ACT_LIKE"/>
    <property type="match status" value="1"/>
</dbReference>
<evidence type="ECO:0000250" key="1">
    <source>
        <dbReference type="UniProtKB" id="P68137"/>
    </source>
</evidence>
<evidence type="ECO:0000305" key="2"/>
<keyword id="KW-0067">ATP-binding</keyword>
<keyword id="KW-0963">Cytoplasm</keyword>
<keyword id="KW-0206">Cytoskeleton</keyword>
<keyword id="KW-0378">Hydrolase</keyword>
<keyword id="KW-0547">Nucleotide-binding</keyword>
<feature type="chain" id="PRO_0000088921" description="Actin-2">
    <location>
        <begin position="1"/>
        <end position="381"/>
    </location>
</feature>
<sequence>MADGGEDIQPLVCDNGTGMVKAGFAGDDAPRAVFPSIVVGRPRHTGVMVGMGQKDAYVGDEAQSKRGILTLKYPIEHGIVSNWDDMEKISHHTFYNELRVAPEEHPVLLTEAPLNPKANREKMTQIMFETFNVPAMYVLSRLRSCLSLYASGRTTGIVLDSGDGVSHTVPIYEGYALPHAILRLDLAGRDLTDGLMKILTERGYMFTTTATGMSYMKEKLAYVALVMSKSWRLPRARLLVEKNYELPDGQVITIGAVRGSGCPEVLFQPSMIGMESAGIHETTYNSIMKCDVDIRKDLYGNIVLSGGSTMFPGSCYASMSKEITALAPSSMKIKVVAPPERKYSVWIGGSILASLSTFQQMWISKGEYDESGPSIVHRKCF</sequence>
<organism>
    <name type="scientific">Daucus carota</name>
    <name type="common">Wild carrot</name>
    <dbReference type="NCBI Taxonomy" id="4039"/>
    <lineage>
        <taxon>Eukaryota</taxon>
        <taxon>Viridiplantae</taxon>
        <taxon>Streptophyta</taxon>
        <taxon>Embryophyta</taxon>
        <taxon>Tracheophyta</taxon>
        <taxon>Spermatophyta</taxon>
        <taxon>Magnoliopsida</taxon>
        <taxon>eudicotyledons</taxon>
        <taxon>Gunneridae</taxon>
        <taxon>Pentapetalae</taxon>
        <taxon>asterids</taxon>
        <taxon>campanulids</taxon>
        <taxon>Apiales</taxon>
        <taxon>Apiaceae</taxon>
        <taxon>Apioideae</taxon>
        <taxon>Scandiceae</taxon>
        <taxon>Daucinae</taxon>
        <taxon>Daucus</taxon>
        <taxon>Daucus sect. Daucus</taxon>
    </lineage>
</organism>
<reference key="1">
    <citation type="journal article" date="1989" name="Plant Mol. Biol.">
        <title>Molecular evolution of two actin genes from carrot.</title>
        <authorList>
            <person name="Stranathan M."/>
            <person name="Hastings C."/>
            <person name="Trinh H."/>
            <person name="Zimmerman J.L."/>
        </authorList>
    </citation>
    <scope>NUCLEOTIDE SEQUENCE [MRNA]</scope>
</reference>
<protein>
    <recommendedName>
        <fullName>Actin-2</fullName>
        <ecNumber evidence="1">3.6.4.-</ecNumber>
    </recommendedName>
</protein>
<name>ACT2_DAUCA</name>